<protein>
    <recommendedName>
        <fullName evidence="1">Holliday junction branch migration complex subunit RuvA</fullName>
    </recommendedName>
</protein>
<organism>
    <name type="scientific">Listeria monocytogenes serotype 4b (strain F2365)</name>
    <dbReference type="NCBI Taxonomy" id="265669"/>
    <lineage>
        <taxon>Bacteria</taxon>
        <taxon>Bacillati</taxon>
        <taxon>Bacillota</taxon>
        <taxon>Bacilli</taxon>
        <taxon>Bacillales</taxon>
        <taxon>Listeriaceae</taxon>
        <taxon>Listeria</taxon>
    </lineage>
</organism>
<accession>Q71ZD7</accession>
<keyword id="KW-0963">Cytoplasm</keyword>
<keyword id="KW-0227">DNA damage</keyword>
<keyword id="KW-0233">DNA recombination</keyword>
<keyword id="KW-0234">DNA repair</keyword>
<keyword id="KW-0238">DNA-binding</keyword>
<comment type="function">
    <text evidence="1">The RuvA-RuvB-RuvC complex processes Holliday junction (HJ) DNA during genetic recombination and DNA repair, while the RuvA-RuvB complex plays an important role in the rescue of blocked DNA replication forks via replication fork reversal (RFR). RuvA specifically binds to HJ cruciform DNA, conferring on it an open structure. The RuvB hexamer acts as an ATP-dependent pump, pulling dsDNA into and through the RuvAB complex. HJ branch migration allows RuvC to scan DNA until it finds its consensus sequence, where it cleaves and resolves the cruciform DNA.</text>
</comment>
<comment type="subunit">
    <text evidence="1">Homotetramer. Forms an RuvA(8)-RuvB(12)-Holliday junction (HJ) complex. HJ DNA is sandwiched between 2 RuvA tetramers; dsDNA enters through RuvA and exits via RuvB. An RuvB hexamer assembles on each DNA strand where it exits the tetramer. Each RuvB hexamer is contacted by two RuvA subunits (via domain III) on 2 adjacent RuvB subunits; this complex drives branch migration. In the full resolvosome a probable DNA-RuvA(4)-RuvB(12)-RuvC(2) complex forms which resolves the HJ.</text>
</comment>
<comment type="subcellular location">
    <subcellularLocation>
        <location evidence="1">Cytoplasm</location>
    </subcellularLocation>
</comment>
<comment type="domain">
    <text evidence="1">Has three domains with a flexible linker between the domains II and III and assumes an 'L' shape. Domain III is highly mobile and contacts RuvB.</text>
</comment>
<comment type="similarity">
    <text evidence="1">Belongs to the RuvA family.</text>
</comment>
<reference key="1">
    <citation type="journal article" date="2004" name="Nucleic Acids Res.">
        <title>Whole genome comparisons of serotype 4b and 1/2a strains of the food-borne pathogen Listeria monocytogenes reveal new insights into the core genome components of this species.</title>
        <authorList>
            <person name="Nelson K.E."/>
            <person name="Fouts D.E."/>
            <person name="Mongodin E.F."/>
            <person name="Ravel J."/>
            <person name="DeBoy R.T."/>
            <person name="Kolonay J.F."/>
            <person name="Rasko D.A."/>
            <person name="Angiuoli S.V."/>
            <person name="Gill S.R."/>
            <person name="Paulsen I.T."/>
            <person name="Peterson J.D."/>
            <person name="White O."/>
            <person name="Nelson W.C."/>
            <person name="Nierman W.C."/>
            <person name="Beanan M.J."/>
            <person name="Brinkac L.M."/>
            <person name="Daugherty S.C."/>
            <person name="Dodson R.J."/>
            <person name="Durkin A.S."/>
            <person name="Madupu R."/>
            <person name="Haft D.H."/>
            <person name="Selengut J."/>
            <person name="Van Aken S.E."/>
            <person name="Khouri H.M."/>
            <person name="Fedorova N."/>
            <person name="Forberger H.A."/>
            <person name="Tran B."/>
            <person name="Kathariou S."/>
            <person name="Wonderling L.D."/>
            <person name="Uhlich G.A."/>
            <person name="Bayles D.O."/>
            <person name="Luchansky J.B."/>
            <person name="Fraser C.M."/>
        </authorList>
    </citation>
    <scope>NUCLEOTIDE SEQUENCE [LARGE SCALE GENOMIC DNA]</scope>
    <source>
        <strain>F2365</strain>
    </source>
</reference>
<sequence>MYDYIKGTVTTITPEYIVVEAGQIGYQIITGNPFSFQRLEGTEAQVFLYQHVREDNISLFGFQTTEERYLFKKLLSVSGIGPKSALAIIASGDVVPLISAIESEDDVYLTKFPSVGKKTARQIILDLKGKLADVVASEIVYVAPENDMVAGLSPQLEEAVLALEALGYSTRELKKVIPKLSKEEDLTSDAYIKLALQLMTK</sequence>
<name>RUVA_LISMF</name>
<proteinExistence type="inferred from homology"/>
<gene>
    <name evidence="1" type="primary">ruvA</name>
    <name type="ordered locus">LMOf2365_1552</name>
</gene>
<evidence type="ECO:0000255" key="1">
    <source>
        <dbReference type="HAMAP-Rule" id="MF_00031"/>
    </source>
</evidence>
<dbReference type="EMBL" id="AE017262">
    <property type="protein sequence ID" value="AAT04327.1"/>
    <property type="molecule type" value="Genomic_DNA"/>
</dbReference>
<dbReference type="RefSeq" id="WP_003726644.1">
    <property type="nucleotide sequence ID" value="NC_002973.6"/>
</dbReference>
<dbReference type="SMR" id="Q71ZD7"/>
<dbReference type="KEGG" id="lmf:LMOf2365_1552"/>
<dbReference type="HOGENOM" id="CLU_087936_1_0_9"/>
<dbReference type="GO" id="GO:0005737">
    <property type="term" value="C:cytoplasm"/>
    <property type="evidence" value="ECO:0007669"/>
    <property type="project" value="UniProtKB-SubCell"/>
</dbReference>
<dbReference type="GO" id="GO:0009379">
    <property type="term" value="C:Holliday junction helicase complex"/>
    <property type="evidence" value="ECO:0007669"/>
    <property type="project" value="InterPro"/>
</dbReference>
<dbReference type="GO" id="GO:0048476">
    <property type="term" value="C:Holliday junction resolvase complex"/>
    <property type="evidence" value="ECO:0007669"/>
    <property type="project" value="UniProtKB-UniRule"/>
</dbReference>
<dbReference type="GO" id="GO:0005524">
    <property type="term" value="F:ATP binding"/>
    <property type="evidence" value="ECO:0007669"/>
    <property type="project" value="InterPro"/>
</dbReference>
<dbReference type="GO" id="GO:0000400">
    <property type="term" value="F:four-way junction DNA binding"/>
    <property type="evidence" value="ECO:0007669"/>
    <property type="project" value="UniProtKB-UniRule"/>
</dbReference>
<dbReference type="GO" id="GO:0009378">
    <property type="term" value="F:four-way junction helicase activity"/>
    <property type="evidence" value="ECO:0007669"/>
    <property type="project" value="InterPro"/>
</dbReference>
<dbReference type="GO" id="GO:0006310">
    <property type="term" value="P:DNA recombination"/>
    <property type="evidence" value="ECO:0007669"/>
    <property type="project" value="UniProtKB-UniRule"/>
</dbReference>
<dbReference type="GO" id="GO:0006281">
    <property type="term" value="P:DNA repair"/>
    <property type="evidence" value="ECO:0007669"/>
    <property type="project" value="UniProtKB-UniRule"/>
</dbReference>
<dbReference type="CDD" id="cd14332">
    <property type="entry name" value="UBA_RuvA_C"/>
    <property type="match status" value="1"/>
</dbReference>
<dbReference type="Gene3D" id="1.10.150.20">
    <property type="entry name" value="5' to 3' exonuclease, C-terminal subdomain"/>
    <property type="match status" value="1"/>
</dbReference>
<dbReference type="Gene3D" id="1.10.8.10">
    <property type="entry name" value="DNA helicase RuvA subunit, C-terminal domain"/>
    <property type="match status" value="1"/>
</dbReference>
<dbReference type="Gene3D" id="2.40.50.140">
    <property type="entry name" value="Nucleic acid-binding proteins"/>
    <property type="match status" value="1"/>
</dbReference>
<dbReference type="HAMAP" id="MF_00031">
    <property type="entry name" value="DNA_HJ_migration_RuvA"/>
    <property type="match status" value="1"/>
</dbReference>
<dbReference type="InterPro" id="IPR013849">
    <property type="entry name" value="DNA_helicase_Holl-junc_RuvA_I"/>
</dbReference>
<dbReference type="InterPro" id="IPR003583">
    <property type="entry name" value="Hlx-hairpin-Hlx_DNA-bd_motif"/>
</dbReference>
<dbReference type="InterPro" id="IPR012340">
    <property type="entry name" value="NA-bd_OB-fold"/>
</dbReference>
<dbReference type="InterPro" id="IPR000085">
    <property type="entry name" value="RuvA"/>
</dbReference>
<dbReference type="InterPro" id="IPR010994">
    <property type="entry name" value="RuvA_2-like"/>
</dbReference>
<dbReference type="InterPro" id="IPR011114">
    <property type="entry name" value="RuvA_C"/>
</dbReference>
<dbReference type="InterPro" id="IPR036267">
    <property type="entry name" value="RuvA_C_sf"/>
</dbReference>
<dbReference type="NCBIfam" id="TIGR00084">
    <property type="entry name" value="ruvA"/>
    <property type="match status" value="1"/>
</dbReference>
<dbReference type="Pfam" id="PF14520">
    <property type="entry name" value="HHH_5"/>
    <property type="match status" value="1"/>
</dbReference>
<dbReference type="Pfam" id="PF07499">
    <property type="entry name" value="RuvA_C"/>
    <property type="match status" value="1"/>
</dbReference>
<dbReference type="Pfam" id="PF01330">
    <property type="entry name" value="RuvA_N"/>
    <property type="match status" value="1"/>
</dbReference>
<dbReference type="SMART" id="SM00278">
    <property type="entry name" value="HhH1"/>
    <property type="match status" value="2"/>
</dbReference>
<dbReference type="SUPFAM" id="SSF46929">
    <property type="entry name" value="DNA helicase RuvA subunit, C-terminal domain"/>
    <property type="match status" value="1"/>
</dbReference>
<dbReference type="SUPFAM" id="SSF50249">
    <property type="entry name" value="Nucleic acid-binding proteins"/>
    <property type="match status" value="1"/>
</dbReference>
<dbReference type="SUPFAM" id="SSF47781">
    <property type="entry name" value="RuvA domain 2-like"/>
    <property type="match status" value="1"/>
</dbReference>
<feature type="chain" id="PRO_0000094645" description="Holliday junction branch migration complex subunit RuvA">
    <location>
        <begin position="1"/>
        <end position="201"/>
    </location>
</feature>
<feature type="region of interest" description="Domain I" evidence="1">
    <location>
        <begin position="1"/>
        <end position="63"/>
    </location>
</feature>
<feature type="region of interest" description="Domain II" evidence="1">
    <location>
        <begin position="64"/>
        <end position="142"/>
    </location>
</feature>
<feature type="region of interest" description="Flexible linker" evidence="1">
    <location>
        <begin position="143"/>
        <end position="153"/>
    </location>
</feature>
<feature type="region of interest" description="Domain III" evidence="1">
    <location>
        <begin position="153"/>
        <end position="201"/>
    </location>
</feature>